<evidence type="ECO:0000250" key="1"/>
<evidence type="ECO:0000255" key="2"/>
<evidence type="ECO:0000305" key="3"/>
<comment type="function">
    <text>Involved in maceration and soft-rotting of plant tissue.</text>
</comment>
<comment type="catalytic activity">
    <reaction>
        <text>Eliminative cleavage of (1-&gt;4)-alpha-D-galacturonan to give oligosaccharides with 4-deoxy-alpha-D-galact-4-enuronosyl groups at their non-reducing ends.</text>
        <dbReference type="EC" id="4.2.2.2"/>
    </reaction>
</comment>
<comment type="cofactor">
    <cofactor evidence="1">
        <name>Ca(2+)</name>
        <dbReference type="ChEBI" id="CHEBI:29108"/>
    </cofactor>
    <text evidence="1">Binds 1 Ca(2+) ion per subunit.</text>
</comment>
<comment type="pathway">
    <text>Glycan metabolism; pectin degradation; 2-dehydro-3-deoxy-D-gluconate from pectin: step 2/5.</text>
</comment>
<comment type="subcellular location">
    <subcellularLocation>
        <location>Secreted</location>
    </subcellularLocation>
</comment>
<comment type="similarity">
    <text evidence="3">Belongs to the polysaccharide lyase 1 family. PLADES subfamily.</text>
</comment>
<accession>Q6CZT2</accession>
<accession>O31035</accession>
<accession>P14006</accession>
<accession>P29171</accession>
<accession>Q47470</accession>
<dbReference type="EC" id="4.2.2.2"/>
<dbReference type="EMBL" id="X81847">
    <property type="protein sequence ID" value="CAA57441.1"/>
    <property type="molecule type" value="Genomic_DNA"/>
</dbReference>
<dbReference type="EMBL" id="BX950851">
    <property type="protein sequence ID" value="CAG76966.1"/>
    <property type="molecule type" value="Genomic_DNA"/>
</dbReference>
<dbReference type="RefSeq" id="WP_011095543.1">
    <property type="nucleotide sequence ID" value="NC_004547.2"/>
</dbReference>
<dbReference type="SMR" id="Q6CZT2"/>
<dbReference type="STRING" id="218491.ECA4069"/>
<dbReference type="CAZy" id="PL1">
    <property type="family name" value="Polysaccharide Lyase Family 1"/>
</dbReference>
<dbReference type="GeneID" id="57210733"/>
<dbReference type="KEGG" id="eca:ECA4069"/>
<dbReference type="PATRIC" id="fig|218491.5.peg.4139"/>
<dbReference type="eggNOG" id="COG3866">
    <property type="taxonomic scope" value="Bacteria"/>
</dbReference>
<dbReference type="HOGENOM" id="CLU_021894_2_1_6"/>
<dbReference type="OrthoDB" id="5592990at2"/>
<dbReference type="UniPathway" id="UPA00545">
    <property type="reaction ID" value="UER00824"/>
</dbReference>
<dbReference type="Proteomes" id="UP000007966">
    <property type="component" value="Chromosome"/>
</dbReference>
<dbReference type="GO" id="GO:0005576">
    <property type="term" value="C:extracellular region"/>
    <property type="evidence" value="ECO:0007669"/>
    <property type="project" value="UniProtKB-SubCell"/>
</dbReference>
<dbReference type="GO" id="GO:0046872">
    <property type="term" value="F:metal ion binding"/>
    <property type="evidence" value="ECO:0007669"/>
    <property type="project" value="UniProtKB-KW"/>
</dbReference>
<dbReference type="GO" id="GO:0030570">
    <property type="term" value="F:pectate lyase activity"/>
    <property type="evidence" value="ECO:0007669"/>
    <property type="project" value="UniProtKB-EC"/>
</dbReference>
<dbReference type="GO" id="GO:0045490">
    <property type="term" value="P:pectin catabolic process"/>
    <property type="evidence" value="ECO:0007669"/>
    <property type="project" value="UniProtKB-UniPathway"/>
</dbReference>
<dbReference type="Gene3D" id="2.160.20.10">
    <property type="entry name" value="Single-stranded right-handed beta-helix, Pectin lyase-like"/>
    <property type="match status" value="1"/>
</dbReference>
<dbReference type="InterPro" id="IPR002022">
    <property type="entry name" value="Pec_lyase"/>
</dbReference>
<dbReference type="InterPro" id="IPR012334">
    <property type="entry name" value="Pectin_lyas_fold"/>
</dbReference>
<dbReference type="InterPro" id="IPR011050">
    <property type="entry name" value="Pectin_lyase_fold/virulence"/>
</dbReference>
<dbReference type="InterPro" id="IPR045032">
    <property type="entry name" value="PEL"/>
</dbReference>
<dbReference type="PANTHER" id="PTHR31683">
    <property type="entry name" value="PECTATE LYASE 18-RELATED"/>
    <property type="match status" value="1"/>
</dbReference>
<dbReference type="PANTHER" id="PTHR31683:SF18">
    <property type="entry name" value="PECTATE LYASE 21-RELATED"/>
    <property type="match status" value="1"/>
</dbReference>
<dbReference type="Pfam" id="PF00544">
    <property type="entry name" value="Pectate_lyase_4"/>
    <property type="match status" value="1"/>
</dbReference>
<dbReference type="SMART" id="SM00656">
    <property type="entry name" value="Amb_all"/>
    <property type="match status" value="1"/>
</dbReference>
<dbReference type="SUPFAM" id="SSF51126">
    <property type="entry name" value="Pectin lyase-like"/>
    <property type="match status" value="1"/>
</dbReference>
<sequence>MKYLLPSTAAGLLLLAAQPTMAANTGGYATTDGGNVAGAVNKTARSMQDIIDIIEEAKLDSKGKKVKGGAYPLIITYNGNEDALIKAAENNICGQWSKDARGVEIKEFTKGVTIIGTNGSSANFGIWLTKSSDVIIRNMRFGYMPGGAQDGDAIRIDNTPNVWIDHNEIFAKNFECQGTKDGDTTFESAIDIKKASTNVTVSYNYIHGIKKVGLSGFSSSDTGRDLTYHHNIYDDVNARLPLQRGGQVHAYNNLYTGITSSGLNVRQKGIALIERNWFENAKNPVTSRYDGSNFGTWELRNNNIMSPADFAKYNITWDKDTKAYVNAEDWKSTGTFASVPYSYSPVSPQCVKDKLANYAGVNKNLAVLTAANCN</sequence>
<gene>
    <name type="primary">pel3</name>
    <name type="synonym">pelC</name>
    <name type="synonym">pelCI</name>
    <name type="ordered locus">ECA4069</name>
</gene>
<name>PLY3_PECAS</name>
<organism>
    <name type="scientific">Pectobacterium atrosepticum (strain SCRI 1043 / ATCC BAA-672)</name>
    <name type="common">Erwinia carotovora subsp. atroseptica</name>
    <dbReference type="NCBI Taxonomy" id="218491"/>
    <lineage>
        <taxon>Bacteria</taxon>
        <taxon>Pseudomonadati</taxon>
        <taxon>Pseudomonadota</taxon>
        <taxon>Gammaproteobacteria</taxon>
        <taxon>Enterobacterales</taxon>
        <taxon>Pectobacteriaceae</taxon>
        <taxon>Pectobacterium</taxon>
    </lineage>
</organism>
<proteinExistence type="inferred from homology"/>
<feature type="signal peptide" evidence="1">
    <location>
        <begin position="1"/>
        <end position="22"/>
    </location>
</feature>
<feature type="chain" id="PRO_0000234450" description="Pectate lyase 3">
    <location>
        <begin position="23"/>
        <end position="374"/>
    </location>
</feature>
<feature type="active site" evidence="2">
    <location>
        <position position="239"/>
    </location>
</feature>
<feature type="binding site" evidence="1">
    <location>
        <position position="150"/>
    </location>
    <ligand>
        <name>Ca(2+)</name>
        <dbReference type="ChEBI" id="CHEBI:29108"/>
    </ligand>
</feature>
<feature type="binding site" evidence="1">
    <location>
        <position position="152"/>
    </location>
    <ligand>
        <name>Ca(2+)</name>
        <dbReference type="ChEBI" id="CHEBI:29108"/>
    </ligand>
</feature>
<feature type="binding site" evidence="1">
    <location>
        <position position="187"/>
    </location>
    <ligand>
        <name>Ca(2+)</name>
        <dbReference type="ChEBI" id="CHEBI:29108"/>
    </ligand>
</feature>
<feature type="binding site" evidence="1">
    <location>
        <position position="191"/>
    </location>
    <ligand>
        <name>Ca(2+)</name>
        <dbReference type="ChEBI" id="CHEBI:29108"/>
    </ligand>
</feature>
<feature type="disulfide bond" evidence="1">
    <location>
        <begin position="93"/>
        <end position="176"/>
    </location>
</feature>
<feature type="disulfide bond" evidence="1">
    <location>
        <begin position="350"/>
        <end position="373"/>
    </location>
</feature>
<feature type="sequence conflict" description="In Ref. 1; CAA57441." evidence="3" ref="1">
    <original>T</original>
    <variation>A</variation>
    <location>
        <position position="8"/>
    </location>
</feature>
<feature type="sequence conflict" description="In Ref. 1; CAA57441." evidence="3" ref="1">
    <original>A</original>
    <variation>V</variation>
    <location>
        <position position="22"/>
    </location>
</feature>
<feature type="sequence conflict" description="In Ref. 1; CAA57441." evidence="3" ref="1">
    <original>N</original>
    <variation>D</variation>
    <location>
        <position position="35"/>
    </location>
</feature>
<feature type="sequence conflict" description="In Ref. 1; CAA57441." evidence="3" ref="1">
    <original>N</original>
    <variation>K</variation>
    <location>
        <position position="41"/>
    </location>
</feature>
<feature type="sequence conflict" description="In Ref. 1; CAA57441." evidence="3" ref="1">
    <original>E</original>
    <variation>A</variation>
    <location>
        <position position="56"/>
    </location>
</feature>
<feature type="sequence conflict" description="In Ref. 1; CAA57441." evidence="3" ref="1">
    <original>K</original>
    <variation>N</variation>
    <location>
        <position position="62"/>
    </location>
</feature>
<feature type="sequence conflict" description="In Ref. 1; CAA57441." evidence="3" ref="1">
    <original>Y</original>
    <variation>L</variation>
    <location>
        <position position="71"/>
    </location>
</feature>
<feature type="sequence conflict" description="In Ref. 1; CAA57441." evidence="3" ref="1">
    <original>I</original>
    <variation>V</variation>
    <location>
        <position position="74"/>
    </location>
</feature>
<feature type="sequence conflict" description="In Ref. 1; CAA57441." evidence="3" ref="1">
    <original>YN</original>
    <variation>FI</variation>
    <location>
        <begin position="77"/>
        <end position="78"/>
    </location>
</feature>
<feature type="sequence conflict" description="In Ref. 1; CAA57441." evidence="3" ref="1">
    <original>N</original>
    <variation>A</variation>
    <location>
        <position position="90"/>
    </location>
</feature>
<feature type="sequence conflict" description="In Ref. 1; CAA57441." evidence="3" ref="1">
    <original>V</original>
    <variation>I</variation>
    <location>
        <position position="112"/>
    </location>
</feature>
<feature type="sequence conflict" description="In Ref. 1; CAA57441." evidence="3" ref="1">
    <original>I</original>
    <variation>L</variation>
    <location>
        <position position="115"/>
    </location>
</feature>
<feature type="sequence conflict" description="In Ref. 1; CAA57441." evidence="3" ref="1">
    <original>VI</original>
    <variation>IV</variation>
    <location>
        <begin position="134"/>
        <end position="135"/>
    </location>
</feature>
<feature type="sequence conflict" description="In Ref. 1; CAA57441." evidence="3" ref="1">
    <original>Q</original>
    <variation>A</variation>
    <location>
        <position position="177"/>
    </location>
</feature>
<feature type="sequence conflict" description="In Ref. 1; CAA57441." evidence="3" ref="1">
    <original>V</original>
    <variation>I</variation>
    <location>
        <position position="201"/>
    </location>
</feature>
<feature type="sequence conflict" description="In Ref. 1; CAA57441." evidence="3" ref="1">
    <original>I</original>
    <variation>V</variation>
    <location>
        <position position="304"/>
    </location>
</feature>
<feature type="sequence conflict" description="In Ref. 1; CAA57441." evidence="3" ref="1">
    <original>A</original>
    <variation>P</variation>
    <location>
        <position position="323"/>
    </location>
</feature>
<feature type="sequence conflict" description="In Ref. 1; CAA57441." evidence="3" ref="1">
    <original>A</original>
    <variation>S</variation>
    <location>
        <position position="327"/>
    </location>
</feature>
<feature type="sequence conflict" description="In Ref. 1; CAA57441." evidence="3" ref="1">
    <original>S</original>
    <variation>N</variation>
    <location>
        <position position="332"/>
    </location>
</feature>
<feature type="sequence conflict" description="In Ref. 1; CAA57441." evidence="3" ref="1">
    <original>P</original>
    <variation>A</variation>
    <location>
        <position position="348"/>
    </location>
</feature>
<feature type="sequence conflict" description="In Ref. 1; CAA57441." evidence="3" ref="1">
    <original>K</original>
    <variation>Q</variation>
    <location>
        <position position="363"/>
    </location>
</feature>
<feature type="sequence conflict" description="In Ref. 1; CAA57441." evidence="3" ref="1">
    <original>A</original>
    <variation>S</variation>
    <location>
        <position position="366"/>
    </location>
</feature>
<feature type="sequence conflict" description="In Ref. 1; CAA57441." evidence="3" ref="1">
    <original>T</original>
    <variation>S</variation>
    <location>
        <position position="369"/>
    </location>
</feature>
<reference key="1">
    <citation type="journal article" date="1995" name="Microbiology">
        <title>Synergism between Erwinia pectate lyase isoenzymes that depolymerize both pectate and pectin.</title>
        <authorList>
            <person name="Bartling S."/>
            <person name="Wegener C."/>
            <person name="Olsen O."/>
        </authorList>
    </citation>
    <scope>NUCLEOTIDE SEQUENCE [GENOMIC DNA]</scope>
    <source>
        <strain>C18</strain>
    </source>
</reference>
<reference key="2">
    <citation type="journal article" date="2004" name="Proc. Natl. Acad. Sci. U.S.A.">
        <title>Genome sequence of the enterobacterial phytopathogen Erwinia carotovora subsp. atroseptica and characterization of virulence factors.</title>
        <authorList>
            <person name="Bell K.S."/>
            <person name="Sebaihia M."/>
            <person name="Pritchard L."/>
            <person name="Holden M.T.G."/>
            <person name="Hyman L.J."/>
            <person name="Holeva M.C."/>
            <person name="Thomson N.R."/>
            <person name="Bentley S.D."/>
            <person name="Churcher L.J.C."/>
            <person name="Mungall K."/>
            <person name="Atkin R."/>
            <person name="Bason N."/>
            <person name="Brooks K."/>
            <person name="Chillingworth T."/>
            <person name="Clark K."/>
            <person name="Doggett J."/>
            <person name="Fraser A."/>
            <person name="Hance Z."/>
            <person name="Hauser H."/>
            <person name="Jagels K."/>
            <person name="Moule S."/>
            <person name="Norbertczak H."/>
            <person name="Ormond D."/>
            <person name="Price C."/>
            <person name="Quail M.A."/>
            <person name="Sanders M."/>
            <person name="Walker D."/>
            <person name="Whitehead S."/>
            <person name="Salmond G.P.C."/>
            <person name="Birch P.R.J."/>
            <person name="Parkhill J."/>
            <person name="Toth I.K."/>
        </authorList>
    </citation>
    <scope>NUCLEOTIDE SEQUENCE [LARGE SCALE GENOMIC DNA]</scope>
    <source>
        <strain>SCRI 1043 / ATCC BAA-672</strain>
    </source>
</reference>
<protein>
    <recommendedName>
        <fullName>Pectate lyase 3</fullName>
        <ecNumber>4.2.2.2</ecNumber>
    </recommendedName>
    <alternativeName>
        <fullName>Pectate lyase C</fullName>
        <shortName>PLC</shortName>
    </alternativeName>
    <alternativeName>
        <fullName>Pectate lyase III</fullName>
        <shortName>PEL III</shortName>
    </alternativeName>
</protein>
<keyword id="KW-0106">Calcium</keyword>
<keyword id="KW-1015">Disulfide bond</keyword>
<keyword id="KW-0456">Lyase</keyword>
<keyword id="KW-0479">Metal-binding</keyword>
<keyword id="KW-1185">Reference proteome</keyword>
<keyword id="KW-0964">Secreted</keyword>
<keyword id="KW-0732">Signal</keyword>